<dbReference type="EC" id="2.4.-.-" evidence="1"/>
<dbReference type="EC" id="2.4.2.-" evidence="1"/>
<dbReference type="EC" id="2.4.1.-" evidence="1"/>
<dbReference type="EMBL" id="AY662337">
    <property type="protein sequence ID" value="AAU12250.1"/>
    <property type="molecule type" value="mRNA"/>
</dbReference>
<dbReference type="RefSeq" id="NP_001004383.1">
    <property type="nucleotide sequence ID" value="NM_001004383.1"/>
</dbReference>
<dbReference type="SMR" id="Q66PG3"/>
<dbReference type="FunCoup" id="Q66PG3">
    <property type="interactions" value="161"/>
</dbReference>
<dbReference type="STRING" id="9031.ENSGALP00000020480"/>
<dbReference type="CAZy" id="GT49">
    <property type="family name" value="Glycosyltransferase Family 49"/>
</dbReference>
<dbReference type="CAZy" id="GT8">
    <property type="family name" value="Glycosyltransferase Family 8"/>
</dbReference>
<dbReference type="GlyCosmos" id="Q66PG3">
    <property type="glycosylation" value="4 sites, No reported glycans"/>
</dbReference>
<dbReference type="GlyGen" id="Q66PG3">
    <property type="glycosylation" value="4 sites"/>
</dbReference>
<dbReference type="PaxDb" id="9031-ENSGALP00000020480"/>
<dbReference type="GeneID" id="418062"/>
<dbReference type="KEGG" id="gga:418062"/>
<dbReference type="CTD" id="9215"/>
<dbReference type="VEuPathDB" id="HostDB:geneid_418062"/>
<dbReference type="eggNOG" id="KOG3765">
    <property type="taxonomic scope" value="Eukaryota"/>
</dbReference>
<dbReference type="InParanoid" id="Q66PG3"/>
<dbReference type="OrthoDB" id="411524at2759"/>
<dbReference type="PhylomeDB" id="Q66PG3"/>
<dbReference type="UniPathway" id="UPA00378"/>
<dbReference type="PRO" id="PR:Q66PG3"/>
<dbReference type="Proteomes" id="UP000000539">
    <property type="component" value="Unassembled WGS sequence"/>
</dbReference>
<dbReference type="GO" id="GO:0005794">
    <property type="term" value="C:Golgi apparatus"/>
    <property type="evidence" value="ECO:0000250"/>
    <property type="project" value="UniProtKB"/>
</dbReference>
<dbReference type="GO" id="GO:0000139">
    <property type="term" value="C:Golgi membrane"/>
    <property type="evidence" value="ECO:0007669"/>
    <property type="project" value="UniProtKB-SubCell"/>
</dbReference>
<dbReference type="GO" id="GO:0015020">
    <property type="term" value="F:glucuronosyltransferase activity"/>
    <property type="evidence" value="ECO:0000250"/>
    <property type="project" value="UniProtKB"/>
</dbReference>
<dbReference type="GO" id="GO:0016758">
    <property type="term" value="F:hexosyltransferase activity"/>
    <property type="evidence" value="ECO:0000250"/>
    <property type="project" value="UniProtKB"/>
</dbReference>
<dbReference type="GO" id="GO:0030145">
    <property type="term" value="F:manganese ion binding"/>
    <property type="evidence" value="ECO:0000250"/>
    <property type="project" value="UniProtKB"/>
</dbReference>
<dbReference type="GO" id="GO:0042285">
    <property type="term" value="F:xylosyltransferase activity"/>
    <property type="evidence" value="ECO:0000250"/>
    <property type="project" value="UniProtKB"/>
</dbReference>
<dbReference type="GO" id="GO:0006486">
    <property type="term" value="P:protein glycosylation"/>
    <property type="evidence" value="ECO:0000250"/>
    <property type="project" value="UniProtKB"/>
</dbReference>
<dbReference type="GO" id="GO:0035269">
    <property type="term" value="P:protein O-linked mannosylation"/>
    <property type="evidence" value="ECO:0000250"/>
    <property type="project" value="UniProtKB"/>
</dbReference>
<dbReference type="GO" id="GO:0060538">
    <property type="term" value="P:skeletal muscle organ development"/>
    <property type="evidence" value="ECO:0000250"/>
    <property type="project" value="UniProtKB"/>
</dbReference>
<dbReference type="GO" id="GO:0043403">
    <property type="term" value="P:skeletal muscle tissue regeneration"/>
    <property type="evidence" value="ECO:0000250"/>
    <property type="project" value="UniProtKB"/>
</dbReference>
<dbReference type="CDD" id="cd06431">
    <property type="entry name" value="GT8_LARGE_C"/>
    <property type="match status" value="1"/>
</dbReference>
<dbReference type="FunFam" id="3.90.550.10:FF:000229">
    <property type="entry name" value="Glycosyltransferase-like protein LARGE"/>
    <property type="match status" value="1"/>
</dbReference>
<dbReference type="FunFam" id="3.90.550.10:FF:000016">
    <property type="entry name" value="LARGE xylosyl- and glucuronyltransferase 2"/>
    <property type="match status" value="1"/>
</dbReference>
<dbReference type="Gene3D" id="3.90.550.10">
    <property type="entry name" value="Spore Coat Polysaccharide Biosynthesis Protein SpsA, Chain A"/>
    <property type="match status" value="1"/>
</dbReference>
<dbReference type="InterPro" id="IPR002495">
    <property type="entry name" value="Glyco_trans_8"/>
</dbReference>
<dbReference type="InterPro" id="IPR029044">
    <property type="entry name" value="Nucleotide-diphossugar_trans"/>
</dbReference>
<dbReference type="InterPro" id="IPR051292">
    <property type="entry name" value="Xyl/GlcA_transferase"/>
</dbReference>
<dbReference type="PANTHER" id="PTHR12270">
    <property type="entry name" value="GLYCOSYLTRANSFERASE-RELATED"/>
    <property type="match status" value="1"/>
</dbReference>
<dbReference type="PANTHER" id="PTHR12270:SF48">
    <property type="entry name" value="XYLOSYL- AND GLUCURONYLTRANSFERASE LARGE1"/>
    <property type="match status" value="1"/>
</dbReference>
<dbReference type="Pfam" id="PF13896">
    <property type="entry name" value="Glyco_transf_49"/>
    <property type="match status" value="1"/>
</dbReference>
<dbReference type="Pfam" id="PF01501">
    <property type="entry name" value="Glyco_transf_8"/>
    <property type="match status" value="1"/>
</dbReference>
<dbReference type="SUPFAM" id="SSF53448">
    <property type="entry name" value="Nucleotide-diphospho-sugar transferases"/>
    <property type="match status" value="1"/>
</dbReference>
<keyword id="KW-0175">Coiled coil</keyword>
<keyword id="KW-0325">Glycoprotein</keyword>
<keyword id="KW-0328">Glycosyltransferase</keyword>
<keyword id="KW-0333">Golgi apparatus</keyword>
<keyword id="KW-0464">Manganese</keyword>
<keyword id="KW-0472">Membrane</keyword>
<keyword id="KW-0479">Metal-binding</keyword>
<keyword id="KW-0511">Multifunctional enzyme</keyword>
<keyword id="KW-1185">Reference proteome</keyword>
<keyword id="KW-0735">Signal-anchor</keyword>
<keyword id="KW-0808">Transferase</keyword>
<keyword id="KW-0812">Transmembrane</keyword>
<keyword id="KW-1133">Transmembrane helix</keyword>
<proteinExistence type="evidence at transcript level"/>
<reference key="1">
    <citation type="journal article" date="2005" name="Glycobiology">
        <title>Characterization of the LARGE family of putative glycosyltransferases associated with dystroglycanopathies.</title>
        <authorList>
            <person name="Grewal P.K."/>
            <person name="McLaughlan J.M."/>
            <person name="Moore C.J."/>
            <person name="Browning C.A."/>
            <person name="Hewitt J.E."/>
        </authorList>
    </citation>
    <scope>NUCLEOTIDE SEQUENCE [MRNA]</scope>
</reference>
<comment type="function">
    <text evidence="1 2">Bifunctional glycosyltransferase with both alpha-1,3-xylosyltransferase and beta-1,3-glucuronyltransferase activities involved in the maturation of alpha-dystroglycan (DAG1) by glycosylation leading to DAG1 binding to laminin G-like domain-containing extracellular proteins with high affinity. Elongates the glucuronyl-beta-1,4-xylose-beta disaccharide primer structure initiated by B4GAT1 by adding repeating units [-3-Xylose-alpha-1,3-GlcA-beta-1-] to produce a heteropolysaccharide. Requires the phosphorylation of core M3 (O-mannosyl trisaccharide) by POMK to elongate the glucuronyl-beta-1,4-xylose-beta disaccharide primer (By similarity). Plays a key role in skeletal muscle function and regeneration (By similarity).</text>
</comment>
<comment type="catalytic activity">
    <reaction evidence="1">
        <text>3-O-[beta-D-GlcA-(1-&gt;3)-beta-D-Xyl-(1-&gt;4)-Rib-ol-P-Rib-ol-P-3-beta-D-GalNAc-(1-&gt;3)-beta-D-GlcNAc-(1-&gt;4)-(O-6-P-alpha-D-Man)]-Thr-[protein] + UDP-alpha-D-xylose = 3-O-[alpha-D-Xyl-(1-&gt;3)-beta-D-GlcA-(1-&gt;4)-beta-D-Xyl-(1-&gt;4)-Rib-ol-P-Rib-ol-P-3-beta-D-GalNAc-(1-&gt;3)-beta-D-GlcNAc-(1-&gt;4)-(O-6-P-alpha-D-Man)]-Thr-[protein] + UDP + H(+)</text>
        <dbReference type="Rhea" id="RHEA:57336"/>
        <dbReference type="Rhea" id="RHEA-COMP:17482"/>
        <dbReference type="Rhea" id="RHEA-COMP:17483"/>
        <dbReference type="ChEBI" id="CHEBI:15378"/>
        <dbReference type="ChEBI" id="CHEBI:57632"/>
        <dbReference type="ChEBI" id="CHEBI:58223"/>
        <dbReference type="ChEBI" id="CHEBI:177336"/>
        <dbReference type="ChEBI" id="CHEBI:177352"/>
    </reaction>
    <physiologicalReaction direction="left-to-right" evidence="1">
        <dbReference type="Rhea" id="RHEA:57337"/>
    </physiologicalReaction>
</comment>
<comment type="catalytic activity">
    <reaction evidence="1">
        <text>3-O-{(1-&gt;[3)-alpha-D-Xyl-(1-&gt;3)-beta-D-GlcA-(1-&gt;](n)-4)-beta-D-Xyl-(1-&gt;4)-Rib-ol-P-Rib-ol-P-3-beta-D-GalNAc-(1-&gt;3)-beta-D-GlcNAc-(1-&gt;4)-O-6-P-alpha-D-Man}-L-Thr-[protein] + UDP-alpha-D-glucuronate = 3-O-{beta-D-GlcA-(1-&gt;[3)-alpha-D-Xyl-(1-&gt;3)-beta-D-GlcA-(1-&gt;](n)-4)-beta-D-Xyl-(1-&gt;4)-Rib-ol-P-Rib-ol-P-3-beta-D-GalNAc-(1-&gt;3)-beta-D-GlcNAc-(1-&gt;4)-O-6-P-alpha-D-Man}-L-Thr-[protein] + UDP + H(+)</text>
        <dbReference type="Rhea" id="RHEA:67924"/>
        <dbReference type="Rhea" id="RHEA-COMP:17484"/>
        <dbReference type="Rhea" id="RHEA-COMP:17486"/>
        <dbReference type="ChEBI" id="CHEBI:15378"/>
        <dbReference type="ChEBI" id="CHEBI:58052"/>
        <dbReference type="ChEBI" id="CHEBI:58223"/>
        <dbReference type="ChEBI" id="CHEBI:177354"/>
        <dbReference type="ChEBI" id="CHEBI:177355"/>
    </reaction>
    <physiologicalReaction direction="left-to-right" evidence="1">
        <dbReference type="Rhea" id="RHEA:67925"/>
    </physiologicalReaction>
</comment>
<comment type="catalytic activity">
    <reaction evidence="1">
        <text>3-O-{beta-D-GlcA-(1-&gt;[3)-alpha-D-Xyl-(1-&gt;3)-beta-D-GlcA-(1-&gt;](n)-4)-beta-D-Xyl-(1-&gt;4)-Rib-ol-P-Rib-ol-P-3-beta-D-GalNAc-(1-&gt;3)-beta-D-GlcNAc-(1-&gt;4)-O-6-P-alpha-D-Man}-L-Thr-[protein] + UDP-alpha-D-xylose = 3-O-{(1-&gt;[3)-alpha-D-Xyl-(1-&gt;3)-beta-D-GlcA-(1-&gt;](n+1)-4)-beta-D-Xyl-(1-&gt;4)-Rib-ol-P-Rib-ol-P-3-beta-D-GalNAc-(1-&gt;3)-beta-D-GlcNAc-(1-&gt;4)-O-6-P-alpha-D-Man}-L-Thr-[protein] + UDP + H(+)</text>
        <dbReference type="Rhea" id="RHEA:68368"/>
        <dbReference type="Rhea" id="RHEA-COMP:17485"/>
        <dbReference type="Rhea" id="RHEA-COMP:17486"/>
        <dbReference type="ChEBI" id="CHEBI:15378"/>
        <dbReference type="ChEBI" id="CHEBI:57632"/>
        <dbReference type="ChEBI" id="CHEBI:58223"/>
        <dbReference type="ChEBI" id="CHEBI:177354"/>
        <dbReference type="ChEBI" id="CHEBI:177355"/>
    </reaction>
    <physiologicalReaction direction="left-to-right" evidence="1">
        <dbReference type="Rhea" id="RHEA:68369"/>
    </physiologicalReaction>
</comment>
<comment type="cofactor">
    <cofactor evidence="1">
        <name>Mn(2+)</name>
        <dbReference type="ChEBI" id="CHEBI:29035"/>
    </cofactor>
    <text evidence="1">Binds 2 Mn(2+) ions per subunit. The xylosyltransferase part binds one Mn(2+) and the beta-1,3-glucuronyltransferase part binds one Mn(2+).</text>
</comment>
<comment type="pathway">
    <text evidence="1">Protein modification; protein glycosylation.</text>
</comment>
<comment type="subcellular location">
    <subcellularLocation>
        <location evidence="1">Golgi apparatus membrane</location>
        <topology evidence="1">Single-pass type II membrane protein</topology>
    </subcellularLocation>
</comment>
<comment type="similarity">
    <text evidence="5">In the C-terminal section; belongs to the glycosyltransferase 49 family.</text>
</comment>
<comment type="similarity">
    <text evidence="5">In the N-terminal section; belongs to the glycosyltransferase 8 family.</text>
</comment>
<organism>
    <name type="scientific">Gallus gallus</name>
    <name type="common">Chicken</name>
    <dbReference type="NCBI Taxonomy" id="9031"/>
    <lineage>
        <taxon>Eukaryota</taxon>
        <taxon>Metazoa</taxon>
        <taxon>Chordata</taxon>
        <taxon>Craniata</taxon>
        <taxon>Vertebrata</taxon>
        <taxon>Euteleostomi</taxon>
        <taxon>Archelosauria</taxon>
        <taxon>Archosauria</taxon>
        <taxon>Dinosauria</taxon>
        <taxon>Saurischia</taxon>
        <taxon>Theropoda</taxon>
        <taxon>Coelurosauria</taxon>
        <taxon>Aves</taxon>
        <taxon>Neognathae</taxon>
        <taxon>Galloanserae</taxon>
        <taxon>Galliformes</taxon>
        <taxon>Phasianidae</taxon>
        <taxon>Phasianinae</taxon>
        <taxon>Gallus</taxon>
    </lineage>
</organism>
<feature type="chain" id="PRO_0000226809" description="Xylosyl- and glucuronyltransferase LARGE1">
    <location>
        <begin position="1"/>
        <end position="756"/>
    </location>
</feature>
<feature type="topological domain" description="Cytoplasmic" evidence="3">
    <location>
        <begin position="1"/>
        <end position="10"/>
    </location>
</feature>
<feature type="transmembrane region" description="Helical; Signal-anchor for type II membrane protein" evidence="3">
    <location>
        <begin position="11"/>
        <end position="31"/>
    </location>
</feature>
<feature type="topological domain" description="Lumenal" evidence="3">
    <location>
        <begin position="32"/>
        <end position="756"/>
    </location>
</feature>
<feature type="region of interest" description="Disordered" evidence="4">
    <location>
        <begin position="42"/>
        <end position="63"/>
    </location>
</feature>
<feature type="region of interest" description="Disordered" evidence="4">
    <location>
        <begin position="81"/>
        <end position="109"/>
    </location>
</feature>
<feature type="region of interest" description="Xylosyltransferase activity" evidence="1">
    <location>
        <begin position="138"/>
        <end position="413"/>
    </location>
</feature>
<feature type="region of interest" description="Glucuronyltransferase activity" evidence="1">
    <location>
        <begin position="414"/>
        <end position="756"/>
    </location>
</feature>
<feature type="coiled-coil region" evidence="3">
    <location>
        <begin position="55"/>
        <end position="90"/>
    </location>
</feature>
<feature type="compositionally biased region" description="Polar residues" evidence="4">
    <location>
        <begin position="44"/>
        <end position="58"/>
    </location>
</feature>
<feature type="binding site" evidence="1">
    <location>
        <position position="242"/>
    </location>
    <ligand>
        <name>Mn(2+)</name>
        <dbReference type="ChEBI" id="CHEBI:29035"/>
        <label>1</label>
    </ligand>
</feature>
<feature type="binding site" evidence="1">
    <location>
        <position position="244"/>
    </location>
    <ligand>
        <name>Mn(2+)</name>
        <dbReference type="ChEBI" id="CHEBI:29035"/>
        <label>1</label>
    </ligand>
</feature>
<feature type="binding site" evidence="1">
    <location>
        <position position="563"/>
    </location>
    <ligand>
        <name>Mn(2+)</name>
        <dbReference type="ChEBI" id="CHEBI:29035"/>
        <label>2</label>
    </ligand>
</feature>
<feature type="binding site" evidence="1">
    <location>
        <position position="565"/>
    </location>
    <ligand>
        <name>Mn(2+)</name>
        <dbReference type="ChEBI" id="CHEBI:29035"/>
        <label>2</label>
    </ligand>
</feature>
<feature type="glycosylation site" description="N-linked (GlcNAc...) asparagine" evidence="3">
    <location>
        <position position="97"/>
    </location>
</feature>
<feature type="glycosylation site" description="N-linked (GlcNAc...) asparagine" evidence="3">
    <location>
        <position position="122"/>
    </location>
</feature>
<feature type="glycosylation site" description="N-linked (GlcNAc...) asparagine" evidence="3">
    <location>
        <position position="148"/>
    </location>
</feature>
<feature type="glycosylation site" description="N-linked (GlcNAc...) asparagine" evidence="3">
    <location>
        <position position="272"/>
    </location>
</feature>
<gene>
    <name evidence="1" type="primary">LARGE1</name>
    <name type="synonym">LARGE</name>
</gene>
<evidence type="ECO:0000250" key="1">
    <source>
        <dbReference type="UniProtKB" id="O95461"/>
    </source>
</evidence>
<evidence type="ECO:0000250" key="2">
    <source>
        <dbReference type="UniProtKB" id="Q9Z1M7"/>
    </source>
</evidence>
<evidence type="ECO:0000255" key="3"/>
<evidence type="ECO:0000256" key="4">
    <source>
        <dbReference type="SAM" id="MobiDB-lite"/>
    </source>
</evidence>
<evidence type="ECO:0000305" key="5"/>
<protein>
    <recommendedName>
        <fullName evidence="5">Xylosyl- and glucuronyltransferase LARGE1</fullName>
        <ecNumber evidence="1">2.4.-.-</ecNumber>
    </recommendedName>
    <alternativeName>
        <fullName>Acetylglucosaminyltransferase-like 1A</fullName>
    </alternativeName>
    <alternativeName>
        <fullName>Glycosyltransferase-like protein</fullName>
    </alternativeName>
    <domain>
        <recommendedName>
            <fullName evidence="5">Alpha-1,3-xylosyltransferase LARGE1</fullName>
            <ecNumber evidence="1">2.4.2.-</ecNumber>
        </recommendedName>
    </domain>
    <domain>
        <recommendedName>
            <fullName evidence="5">Beta-1,3-glucuronyltransferase LARGE1</fullName>
            <ecNumber evidence="1">2.4.1.-</ecNumber>
        </recommendedName>
    </domain>
</protein>
<name>LARG1_CHICK</name>
<accession>Q66PG3</accession>
<sequence>MLGICRGRRKFLAASLTVLFVPAVTWIYLFAGSFEDGKPVSLSPLESQPHSPRYTASSQRDRESLEVRMREVEEENRVLRKQLSLAQGRSPSHHRGNHSKTYSMEEGTGDSESLRAGIVAGNSSECGQQPAVEKCETIHVAIVCAGYNASRDVVTLVKSVLFHRRNPLHFHLIADAIAKQILATLFQTWMVPAVRIDFYDADELKSEVSWIPNKHYSGIYGLMKLVLTKTLPSNLERVIVLDTDITFATDIAELWAVFHKFKGQQVLGLVENQSDWYLGNLWKNHRPWPALGRGYNTGVILLLLDKLRKMKWEQMWRLTAERELMSMLSTSLADQDIFNAVIKQNPFLVYQLPCFWNVQLSDHTRSEQCYRDVSDLKVIHWNSPKKLRVKNKHVEFFRNLYLTFLEYDGNLLRRELFGCPSEADVNSENLQKQLSEPDEDDLCYEFRRERFTVHRTHLYFLHYEYEPASDNTDVTLVAQLSMDRLQMLEAICKHWEDPISLALYLSDAEAQQFLRYAQGSEVLMSRHNVGYHIVYKEGQFYPVNLLRNVAMKHISTPYMFLSDIDFLPMYGLYEYLRKSVTQLDLANTKKALIIPAFETLRYRLSFPKSKAELLSMLDMGTLFTFRYHVWTKGHAPTNFAKWRTATTPYRVEWEADFEPYVVVRKDCPEYDRRFVGFGWNKVAHIMELDAQEYEFTVLPNAYMIHMPHAPSFDITKFRSNKQYRICLKTLKEEFQQDMSRHYGFAALKYLTAENNS</sequence>